<accession>Q6LJ30</accession>
<evidence type="ECO:0000255" key="1">
    <source>
        <dbReference type="HAMAP-Rule" id="MF_00364"/>
    </source>
</evidence>
<proteinExistence type="inferred from homology"/>
<protein>
    <recommendedName>
        <fullName evidence="1">Beta-hexosaminidase</fullName>
        <ecNumber evidence="1">3.2.1.52</ecNumber>
    </recommendedName>
    <alternativeName>
        <fullName evidence="1">Beta-N-acetylhexosaminidase</fullName>
    </alternativeName>
    <alternativeName>
        <fullName evidence="1">N-acetyl-beta-glucosaminidase</fullName>
    </alternativeName>
</protein>
<sequence>MGPLMLDVLGYELNAEEREIIQHPTVGGIIFFARNYHDRAQLRALTKDIRKTAAKPLLIAVDQEGGRVQRFREEFTQLPPARAFEQHNNGIELAKKGGWLMAAELLAMDIDLSLAPVLDLGFDCKAIGDRAFSDDPKKIIKYASQFIKGMKQAGMATTGKHFPGHGGVIADSHLETPFDSRENIKEHDMIVFKYLIENNLLDAMMPAHVVFDAYDDKPASGSDYWLKQVLRQDLHFKGVIFSDDLNMKGADVMGSYSERAIAAQQAGCDMVMLCNNREGAIQALDGLPQVNVPILDTLLKRPTGEYQELIKTSMWKETEKEISRLSLEWREKHS</sequence>
<dbReference type="EC" id="3.2.1.52" evidence="1"/>
<dbReference type="EMBL" id="CR378677">
    <property type="protein sequence ID" value="CAG22700.1"/>
    <property type="molecule type" value="Genomic_DNA"/>
</dbReference>
<dbReference type="RefSeq" id="WP_011220909.1">
    <property type="nucleotide sequence ID" value="NC_006371.1"/>
</dbReference>
<dbReference type="SMR" id="Q6LJ30"/>
<dbReference type="STRING" id="298386.PBPRB0828"/>
<dbReference type="CAZy" id="GH3">
    <property type="family name" value="Glycoside Hydrolase Family 3"/>
</dbReference>
<dbReference type="KEGG" id="ppr:PBPRB0828"/>
<dbReference type="eggNOG" id="COG1472">
    <property type="taxonomic scope" value="Bacteria"/>
</dbReference>
<dbReference type="HOGENOM" id="CLU_008392_0_0_6"/>
<dbReference type="UniPathway" id="UPA00544"/>
<dbReference type="Proteomes" id="UP000000593">
    <property type="component" value="Chromosome 2"/>
</dbReference>
<dbReference type="GO" id="GO:0005737">
    <property type="term" value="C:cytoplasm"/>
    <property type="evidence" value="ECO:0007669"/>
    <property type="project" value="UniProtKB-SubCell"/>
</dbReference>
<dbReference type="GO" id="GO:0004563">
    <property type="term" value="F:beta-N-acetylhexosaminidase activity"/>
    <property type="evidence" value="ECO:0007669"/>
    <property type="project" value="UniProtKB-UniRule"/>
</dbReference>
<dbReference type="GO" id="GO:0005975">
    <property type="term" value="P:carbohydrate metabolic process"/>
    <property type="evidence" value="ECO:0007669"/>
    <property type="project" value="InterPro"/>
</dbReference>
<dbReference type="GO" id="GO:0051301">
    <property type="term" value="P:cell division"/>
    <property type="evidence" value="ECO:0007669"/>
    <property type="project" value="UniProtKB-KW"/>
</dbReference>
<dbReference type="GO" id="GO:0071555">
    <property type="term" value="P:cell wall organization"/>
    <property type="evidence" value="ECO:0007669"/>
    <property type="project" value="UniProtKB-KW"/>
</dbReference>
<dbReference type="GO" id="GO:0009252">
    <property type="term" value="P:peptidoglycan biosynthetic process"/>
    <property type="evidence" value="ECO:0007669"/>
    <property type="project" value="UniProtKB-KW"/>
</dbReference>
<dbReference type="GO" id="GO:0009254">
    <property type="term" value="P:peptidoglycan turnover"/>
    <property type="evidence" value="ECO:0007669"/>
    <property type="project" value="UniProtKB-UniRule"/>
</dbReference>
<dbReference type="GO" id="GO:0008360">
    <property type="term" value="P:regulation of cell shape"/>
    <property type="evidence" value="ECO:0007669"/>
    <property type="project" value="UniProtKB-KW"/>
</dbReference>
<dbReference type="FunFam" id="3.20.20.300:FF:000001">
    <property type="entry name" value="Beta-hexosaminidase"/>
    <property type="match status" value="1"/>
</dbReference>
<dbReference type="Gene3D" id="3.20.20.300">
    <property type="entry name" value="Glycoside hydrolase, family 3, N-terminal domain"/>
    <property type="match status" value="1"/>
</dbReference>
<dbReference type="HAMAP" id="MF_00364">
    <property type="entry name" value="NagZ"/>
    <property type="match status" value="1"/>
</dbReference>
<dbReference type="InterPro" id="IPR022956">
    <property type="entry name" value="Beta_hexosaminidase_bac"/>
</dbReference>
<dbReference type="InterPro" id="IPR019800">
    <property type="entry name" value="Glyco_hydro_3_AS"/>
</dbReference>
<dbReference type="InterPro" id="IPR001764">
    <property type="entry name" value="Glyco_hydro_3_N"/>
</dbReference>
<dbReference type="InterPro" id="IPR036962">
    <property type="entry name" value="Glyco_hydro_3_N_sf"/>
</dbReference>
<dbReference type="InterPro" id="IPR017853">
    <property type="entry name" value="Glycoside_hydrolase_SF"/>
</dbReference>
<dbReference type="InterPro" id="IPR050226">
    <property type="entry name" value="NagZ_Beta-hexosaminidase"/>
</dbReference>
<dbReference type="NCBIfam" id="NF003740">
    <property type="entry name" value="PRK05337.1"/>
    <property type="match status" value="1"/>
</dbReference>
<dbReference type="PANTHER" id="PTHR30480:SF13">
    <property type="entry name" value="BETA-HEXOSAMINIDASE"/>
    <property type="match status" value="1"/>
</dbReference>
<dbReference type="PANTHER" id="PTHR30480">
    <property type="entry name" value="BETA-HEXOSAMINIDASE-RELATED"/>
    <property type="match status" value="1"/>
</dbReference>
<dbReference type="Pfam" id="PF00933">
    <property type="entry name" value="Glyco_hydro_3"/>
    <property type="match status" value="1"/>
</dbReference>
<dbReference type="SUPFAM" id="SSF51445">
    <property type="entry name" value="(Trans)glycosidases"/>
    <property type="match status" value="1"/>
</dbReference>
<dbReference type="PROSITE" id="PS00775">
    <property type="entry name" value="GLYCOSYL_HYDROL_F3"/>
    <property type="match status" value="1"/>
</dbReference>
<feature type="chain" id="PRO_0000234920" description="Beta-hexosaminidase">
    <location>
        <begin position="1"/>
        <end position="334"/>
    </location>
</feature>
<feature type="active site" description="Proton donor/acceptor" evidence="1">
    <location>
        <position position="173"/>
    </location>
</feature>
<feature type="active site" description="Nucleophile" evidence="1">
    <location>
        <position position="243"/>
    </location>
</feature>
<feature type="binding site" evidence="1">
    <location>
        <position position="62"/>
    </location>
    <ligand>
        <name>substrate</name>
    </ligand>
</feature>
<feature type="binding site" evidence="1">
    <location>
        <position position="70"/>
    </location>
    <ligand>
        <name>substrate</name>
    </ligand>
</feature>
<feature type="binding site" evidence="1">
    <location>
        <position position="130"/>
    </location>
    <ligand>
        <name>substrate</name>
    </ligand>
</feature>
<feature type="binding site" evidence="1">
    <location>
        <begin position="160"/>
        <end position="161"/>
    </location>
    <ligand>
        <name>substrate</name>
    </ligand>
</feature>
<feature type="site" description="Important for catalytic activity" evidence="1">
    <location>
        <position position="171"/>
    </location>
</feature>
<reference key="1">
    <citation type="journal article" date="2005" name="Science">
        <title>Life at depth: Photobacterium profundum genome sequence and expression analysis.</title>
        <authorList>
            <person name="Vezzi A."/>
            <person name="Campanaro S."/>
            <person name="D'Angelo M."/>
            <person name="Simonato F."/>
            <person name="Vitulo N."/>
            <person name="Lauro F.M."/>
            <person name="Cestaro A."/>
            <person name="Malacrida G."/>
            <person name="Simionati B."/>
            <person name="Cannata N."/>
            <person name="Romualdi C."/>
            <person name="Bartlett D.H."/>
            <person name="Valle G."/>
        </authorList>
    </citation>
    <scope>NUCLEOTIDE SEQUENCE [LARGE SCALE GENOMIC DNA]</scope>
    <source>
        <strain>ATCC BAA-1253 / SS9</strain>
    </source>
</reference>
<keyword id="KW-0131">Cell cycle</keyword>
<keyword id="KW-0132">Cell division</keyword>
<keyword id="KW-0133">Cell shape</keyword>
<keyword id="KW-0961">Cell wall biogenesis/degradation</keyword>
<keyword id="KW-0963">Cytoplasm</keyword>
<keyword id="KW-0326">Glycosidase</keyword>
<keyword id="KW-0378">Hydrolase</keyword>
<keyword id="KW-0573">Peptidoglycan synthesis</keyword>
<keyword id="KW-1185">Reference proteome</keyword>
<organism>
    <name type="scientific">Photobacterium profundum (strain SS9)</name>
    <dbReference type="NCBI Taxonomy" id="298386"/>
    <lineage>
        <taxon>Bacteria</taxon>
        <taxon>Pseudomonadati</taxon>
        <taxon>Pseudomonadota</taxon>
        <taxon>Gammaproteobacteria</taxon>
        <taxon>Vibrionales</taxon>
        <taxon>Vibrionaceae</taxon>
        <taxon>Photobacterium</taxon>
    </lineage>
</organism>
<gene>
    <name evidence="1" type="primary">nagZ</name>
    <name type="ordered locus">PBPRB0828</name>
</gene>
<comment type="function">
    <text evidence="1">Plays a role in peptidoglycan recycling by cleaving the terminal beta-1,4-linked N-acetylglucosamine (GlcNAc) from peptide-linked peptidoglycan fragments, giving rise to free GlcNAc, anhydro-N-acetylmuramic acid and anhydro-N-acetylmuramic acid-linked peptides.</text>
</comment>
<comment type="catalytic activity">
    <reaction evidence="1">
        <text>Hydrolysis of terminal non-reducing N-acetyl-D-hexosamine residues in N-acetyl-beta-D-hexosaminides.</text>
        <dbReference type="EC" id="3.2.1.52"/>
    </reaction>
</comment>
<comment type="pathway">
    <text evidence="1">Cell wall biogenesis; peptidoglycan recycling.</text>
</comment>
<comment type="subcellular location">
    <subcellularLocation>
        <location evidence="1">Cytoplasm</location>
    </subcellularLocation>
</comment>
<comment type="similarity">
    <text evidence="1">Belongs to the glycosyl hydrolase 3 family. NagZ subfamily.</text>
</comment>
<name>NAGZ_PHOPR</name>